<dbReference type="EMBL" id="BX897699">
    <property type="protein sequence ID" value="CAF28346.1"/>
    <property type="molecule type" value="Genomic_DNA"/>
</dbReference>
<dbReference type="RefSeq" id="WP_011181349.1">
    <property type="nucleotide sequence ID" value="NZ_LRIJ02000001.1"/>
</dbReference>
<dbReference type="SMR" id="Q6G1R8"/>
<dbReference type="PaxDb" id="283166-BH15830"/>
<dbReference type="EnsemblBacteria" id="CAF28346">
    <property type="protein sequence ID" value="CAF28346"/>
    <property type="gene ID" value="BH15830"/>
</dbReference>
<dbReference type="GeneID" id="92986204"/>
<dbReference type="KEGG" id="bhe:BH15830"/>
<dbReference type="eggNOG" id="COG0806">
    <property type="taxonomic scope" value="Bacteria"/>
</dbReference>
<dbReference type="OrthoDB" id="9788191at2"/>
<dbReference type="Proteomes" id="UP000000421">
    <property type="component" value="Chromosome"/>
</dbReference>
<dbReference type="GO" id="GO:0005737">
    <property type="term" value="C:cytoplasm"/>
    <property type="evidence" value="ECO:0007669"/>
    <property type="project" value="UniProtKB-SubCell"/>
</dbReference>
<dbReference type="GO" id="GO:0005840">
    <property type="term" value="C:ribosome"/>
    <property type="evidence" value="ECO:0007669"/>
    <property type="project" value="InterPro"/>
</dbReference>
<dbReference type="GO" id="GO:0043022">
    <property type="term" value="F:ribosome binding"/>
    <property type="evidence" value="ECO:0007669"/>
    <property type="project" value="InterPro"/>
</dbReference>
<dbReference type="GO" id="GO:0042274">
    <property type="term" value="P:ribosomal small subunit biogenesis"/>
    <property type="evidence" value="ECO:0007669"/>
    <property type="project" value="UniProtKB-UniRule"/>
</dbReference>
<dbReference type="GO" id="GO:0006364">
    <property type="term" value="P:rRNA processing"/>
    <property type="evidence" value="ECO:0007669"/>
    <property type="project" value="UniProtKB-UniRule"/>
</dbReference>
<dbReference type="Gene3D" id="2.30.30.240">
    <property type="entry name" value="PRC-barrel domain"/>
    <property type="match status" value="1"/>
</dbReference>
<dbReference type="Gene3D" id="2.40.30.60">
    <property type="entry name" value="RimM"/>
    <property type="match status" value="1"/>
</dbReference>
<dbReference type="HAMAP" id="MF_00014">
    <property type="entry name" value="Ribosome_mat_RimM"/>
    <property type="match status" value="1"/>
</dbReference>
<dbReference type="InterPro" id="IPR011033">
    <property type="entry name" value="PRC_barrel-like_sf"/>
</dbReference>
<dbReference type="InterPro" id="IPR056792">
    <property type="entry name" value="PRC_RimM"/>
</dbReference>
<dbReference type="InterPro" id="IPR011961">
    <property type="entry name" value="RimM"/>
</dbReference>
<dbReference type="InterPro" id="IPR002676">
    <property type="entry name" value="RimM_N"/>
</dbReference>
<dbReference type="InterPro" id="IPR036976">
    <property type="entry name" value="RimM_N_sf"/>
</dbReference>
<dbReference type="InterPro" id="IPR009000">
    <property type="entry name" value="Transl_B-barrel_sf"/>
</dbReference>
<dbReference type="NCBIfam" id="TIGR02273">
    <property type="entry name" value="16S_RimM"/>
    <property type="match status" value="1"/>
</dbReference>
<dbReference type="PANTHER" id="PTHR33692">
    <property type="entry name" value="RIBOSOME MATURATION FACTOR RIMM"/>
    <property type="match status" value="1"/>
</dbReference>
<dbReference type="PANTHER" id="PTHR33692:SF1">
    <property type="entry name" value="RIBOSOME MATURATION FACTOR RIMM"/>
    <property type="match status" value="1"/>
</dbReference>
<dbReference type="Pfam" id="PF24986">
    <property type="entry name" value="PRC_RimM"/>
    <property type="match status" value="1"/>
</dbReference>
<dbReference type="Pfam" id="PF01782">
    <property type="entry name" value="RimM"/>
    <property type="match status" value="1"/>
</dbReference>
<dbReference type="SUPFAM" id="SSF50346">
    <property type="entry name" value="PRC-barrel domain"/>
    <property type="match status" value="1"/>
</dbReference>
<dbReference type="SUPFAM" id="SSF50447">
    <property type="entry name" value="Translation proteins"/>
    <property type="match status" value="1"/>
</dbReference>
<organism>
    <name type="scientific">Bartonella henselae (strain ATCC 49882 / DSM 28221 / CCUG 30454 / Houston 1)</name>
    <name type="common">Rochalimaea henselae</name>
    <dbReference type="NCBI Taxonomy" id="283166"/>
    <lineage>
        <taxon>Bacteria</taxon>
        <taxon>Pseudomonadati</taxon>
        <taxon>Pseudomonadota</taxon>
        <taxon>Alphaproteobacteria</taxon>
        <taxon>Hyphomicrobiales</taxon>
        <taxon>Bartonellaceae</taxon>
        <taxon>Bartonella</taxon>
    </lineage>
</organism>
<sequence length="180" mass="19842">MKYNREKLKNKVCLAIIGMPHGIKGDVLLKILSSEPQRLKTYGTLYDDRGHSYEIVMLRMQKKNAIVHFKGVEDRSAAEALRGIHLYVARDQLVDDLTEDEFYQVDLIGLRVQDCTGRILGEVSGLFNFGAGDLLEMRLNTGKTVLIPFSKAAVLEVCIASGFLVVDPVAAGLSDGGENT</sequence>
<evidence type="ECO:0000255" key="1">
    <source>
        <dbReference type="HAMAP-Rule" id="MF_00014"/>
    </source>
</evidence>
<protein>
    <recommendedName>
        <fullName evidence="1">Ribosome maturation factor RimM</fullName>
    </recommendedName>
</protein>
<name>RIMM_BARHE</name>
<keyword id="KW-0143">Chaperone</keyword>
<keyword id="KW-0963">Cytoplasm</keyword>
<keyword id="KW-0690">Ribosome biogenesis</keyword>
<keyword id="KW-0698">rRNA processing</keyword>
<comment type="function">
    <text evidence="1">An accessory protein needed during the final step in the assembly of 30S ribosomal subunit, possibly for assembly of the head region. Essential for efficient processing of 16S rRNA. May be needed both before and after RbfA during the maturation of 16S rRNA. It has affinity for free ribosomal 30S subunits but not for 70S ribosomes.</text>
</comment>
<comment type="subunit">
    <text evidence="1">Binds ribosomal protein uS19.</text>
</comment>
<comment type="subcellular location">
    <subcellularLocation>
        <location evidence="1">Cytoplasm</location>
    </subcellularLocation>
</comment>
<comment type="domain">
    <text evidence="1">The PRC barrel domain binds ribosomal protein uS19.</text>
</comment>
<comment type="similarity">
    <text evidence="1">Belongs to the RimM family.</text>
</comment>
<gene>
    <name evidence="1" type="primary">rimM</name>
    <name type="ordered locus">BH15830</name>
</gene>
<accession>Q6G1R8</accession>
<reference key="1">
    <citation type="journal article" date="2004" name="Proc. Natl. Acad. Sci. U.S.A.">
        <title>The louse-borne human pathogen Bartonella quintana is a genomic derivative of the zoonotic agent Bartonella henselae.</title>
        <authorList>
            <person name="Alsmark U.C.M."/>
            <person name="Frank A.C."/>
            <person name="Karlberg E.O."/>
            <person name="Legault B.-A."/>
            <person name="Ardell D.H."/>
            <person name="Canbaeck B."/>
            <person name="Eriksson A.-S."/>
            <person name="Naeslund A.K."/>
            <person name="Handley S.A."/>
            <person name="Huvet M."/>
            <person name="La Scola B."/>
            <person name="Holmberg M."/>
            <person name="Andersson S.G.E."/>
        </authorList>
    </citation>
    <scope>NUCLEOTIDE SEQUENCE [LARGE SCALE GENOMIC DNA]</scope>
    <source>
        <strain>ATCC 49882 / DSM 28221 / CCUG 30454 / Houston 1</strain>
    </source>
</reference>
<feature type="chain" id="PRO_0000163254" description="Ribosome maturation factor RimM">
    <location>
        <begin position="1"/>
        <end position="180"/>
    </location>
</feature>
<feature type="domain" description="PRC barrel" evidence="1">
    <location>
        <begin position="99"/>
        <end position="172"/>
    </location>
</feature>
<proteinExistence type="inferred from homology"/>